<organism>
    <name type="scientific">Hahella chejuensis (strain KCTC 2396)</name>
    <dbReference type="NCBI Taxonomy" id="349521"/>
    <lineage>
        <taxon>Bacteria</taxon>
        <taxon>Pseudomonadati</taxon>
        <taxon>Pseudomonadota</taxon>
        <taxon>Gammaproteobacteria</taxon>
        <taxon>Oceanospirillales</taxon>
        <taxon>Hahellaceae</taxon>
        <taxon>Hahella</taxon>
    </lineage>
</organism>
<name>PHNX_HAHCH</name>
<reference key="1">
    <citation type="journal article" date="2005" name="Nucleic Acids Res.">
        <title>Genomic blueprint of Hahella chejuensis, a marine microbe producing an algicidal agent.</title>
        <authorList>
            <person name="Jeong H."/>
            <person name="Yim J.H."/>
            <person name="Lee C."/>
            <person name="Choi S.-H."/>
            <person name="Park Y.K."/>
            <person name="Yoon S.H."/>
            <person name="Hur C.-G."/>
            <person name="Kang H.-Y."/>
            <person name="Kim D."/>
            <person name="Lee H.H."/>
            <person name="Park K.H."/>
            <person name="Park S.-H."/>
            <person name="Park H.-S."/>
            <person name="Lee H.K."/>
            <person name="Oh T.K."/>
            <person name="Kim J.F."/>
        </authorList>
    </citation>
    <scope>NUCLEOTIDE SEQUENCE [LARGE SCALE GENOMIC DNA]</scope>
    <source>
        <strain>KCTC 2396</strain>
    </source>
</reference>
<feature type="chain" id="PRO_0000284588" description="Phosphonoacetaldehyde hydrolase">
    <location>
        <begin position="1"/>
        <end position="294"/>
    </location>
</feature>
<feature type="active site" description="Nucleophile" evidence="1">
    <location>
        <position position="19"/>
    </location>
</feature>
<feature type="active site" description="Schiff-base intermediate with substrate" evidence="1">
    <location>
        <position position="60"/>
    </location>
</feature>
<feature type="binding site" evidence="1">
    <location>
        <position position="19"/>
    </location>
    <ligand>
        <name>Mg(2+)</name>
        <dbReference type="ChEBI" id="CHEBI:18420"/>
    </ligand>
</feature>
<feature type="binding site" evidence="1">
    <location>
        <position position="21"/>
    </location>
    <ligand>
        <name>Mg(2+)</name>
        <dbReference type="ChEBI" id="CHEBI:18420"/>
    </ligand>
</feature>
<feature type="binding site" evidence="1">
    <location>
        <position position="193"/>
    </location>
    <ligand>
        <name>Mg(2+)</name>
        <dbReference type="ChEBI" id="CHEBI:18420"/>
    </ligand>
</feature>
<gene>
    <name evidence="1" type="primary">phnX</name>
    <name type="ordered locus">HCH_03084</name>
</gene>
<evidence type="ECO:0000255" key="1">
    <source>
        <dbReference type="HAMAP-Rule" id="MF_01375"/>
    </source>
</evidence>
<protein>
    <recommendedName>
        <fullName evidence="1">Phosphonoacetaldehyde hydrolase</fullName>
        <shortName evidence="1">Phosphonatase</shortName>
        <ecNumber evidence="1">3.11.1.1</ecNumber>
    </recommendedName>
    <alternativeName>
        <fullName evidence="1">Phosphonoacetaldehyde phosphonohydrolase</fullName>
    </alternativeName>
</protein>
<comment type="function">
    <text evidence="1">Involved in phosphonate degradation.</text>
</comment>
<comment type="catalytic activity">
    <reaction evidence="1">
        <text>phosphonoacetaldehyde + H2O = acetaldehyde + phosphate + H(+)</text>
        <dbReference type="Rhea" id="RHEA:18905"/>
        <dbReference type="ChEBI" id="CHEBI:15343"/>
        <dbReference type="ChEBI" id="CHEBI:15377"/>
        <dbReference type="ChEBI" id="CHEBI:15378"/>
        <dbReference type="ChEBI" id="CHEBI:43474"/>
        <dbReference type="ChEBI" id="CHEBI:58383"/>
        <dbReference type="EC" id="3.11.1.1"/>
    </reaction>
</comment>
<comment type="cofactor">
    <cofactor evidence="1">
        <name>Mg(2+)</name>
        <dbReference type="ChEBI" id="CHEBI:18420"/>
    </cofactor>
    <text evidence="1">Binds 1 Mg(2+) ion per subunit.</text>
</comment>
<comment type="subunit">
    <text evidence="1">Homodimer.</text>
</comment>
<comment type="similarity">
    <text evidence="1">Belongs to the HAD-like hydrolase superfamily. PhnX family.</text>
</comment>
<sequence length="294" mass="32353">MSYAYQRFYRGPIEAVIFDWAGTTYDFGSMAPIRAFQNLFAEQEIPITLAEAREPMGTEKREHITRILNMPRVREAWREKYGALASEADIERLYHAFVPMQIEAIRECARPVPGLMETVAWLERRNIKIGANTGYNRDMLDVLTDIAAAQGYRPASNVCATDVPKGRPYPHMSLKNALELGVGDVRACIKVDDTLPGIEEGLAAGMWTVGVTTSGNEVGLSQEDWTALDSASKTVLREQAQERFRRGGAHVIIGSVADLPAAVEYIERWLAQGHGPDTTGLAGVTLTAAGVSLR</sequence>
<dbReference type="EC" id="3.11.1.1" evidence="1"/>
<dbReference type="EMBL" id="CP000155">
    <property type="protein sequence ID" value="ABC29850.1"/>
    <property type="molecule type" value="Genomic_DNA"/>
</dbReference>
<dbReference type="RefSeq" id="WP_011396919.1">
    <property type="nucleotide sequence ID" value="NC_007645.1"/>
</dbReference>
<dbReference type="SMR" id="Q2SHM4"/>
<dbReference type="STRING" id="349521.HCH_03084"/>
<dbReference type="KEGG" id="hch:HCH_03084"/>
<dbReference type="eggNOG" id="COG0637">
    <property type="taxonomic scope" value="Bacteria"/>
</dbReference>
<dbReference type="HOGENOM" id="CLU_045011_12_0_6"/>
<dbReference type="OrthoDB" id="5504491at2"/>
<dbReference type="Proteomes" id="UP000000238">
    <property type="component" value="Chromosome"/>
</dbReference>
<dbReference type="GO" id="GO:0005829">
    <property type="term" value="C:cytosol"/>
    <property type="evidence" value="ECO:0007669"/>
    <property type="project" value="TreeGrafter"/>
</dbReference>
<dbReference type="GO" id="GO:0000287">
    <property type="term" value="F:magnesium ion binding"/>
    <property type="evidence" value="ECO:0007669"/>
    <property type="project" value="UniProtKB-UniRule"/>
</dbReference>
<dbReference type="GO" id="GO:0008967">
    <property type="term" value="F:phosphoglycolate phosphatase activity"/>
    <property type="evidence" value="ECO:0007669"/>
    <property type="project" value="TreeGrafter"/>
</dbReference>
<dbReference type="GO" id="GO:0050194">
    <property type="term" value="F:phosphonoacetaldehyde hydrolase activity"/>
    <property type="evidence" value="ECO:0007669"/>
    <property type="project" value="UniProtKB-UniRule"/>
</dbReference>
<dbReference type="GO" id="GO:0006281">
    <property type="term" value="P:DNA repair"/>
    <property type="evidence" value="ECO:0007669"/>
    <property type="project" value="TreeGrafter"/>
</dbReference>
<dbReference type="GO" id="GO:0019700">
    <property type="term" value="P:organic phosphonate catabolic process"/>
    <property type="evidence" value="ECO:0007669"/>
    <property type="project" value="InterPro"/>
</dbReference>
<dbReference type="CDD" id="cd02586">
    <property type="entry name" value="HAD_PHN"/>
    <property type="match status" value="1"/>
</dbReference>
<dbReference type="FunFam" id="1.10.150.240:FF:000006">
    <property type="entry name" value="Phosphonoacetaldehyde hydrolase"/>
    <property type="match status" value="1"/>
</dbReference>
<dbReference type="Gene3D" id="3.40.50.1000">
    <property type="entry name" value="HAD superfamily/HAD-like"/>
    <property type="match status" value="1"/>
</dbReference>
<dbReference type="Gene3D" id="1.10.150.240">
    <property type="entry name" value="Putative phosphatase, domain 2"/>
    <property type="match status" value="1"/>
</dbReference>
<dbReference type="HAMAP" id="MF_01375">
    <property type="entry name" value="PhnX"/>
    <property type="match status" value="1"/>
</dbReference>
<dbReference type="InterPro" id="IPR050155">
    <property type="entry name" value="HAD-like_hydrolase_sf"/>
</dbReference>
<dbReference type="InterPro" id="IPR036412">
    <property type="entry name" value="HAD-like_sf"/>
</dbReference>
<dbReference type="InterPro" id="IPR006439">
    <property type="entry name" value="HAD-SF_hydro_IA"/>
</dbReference>
<dbReference type="InterPro" id="IPR023214">
    <property type="entry name" value="HAD_sf"/>
</dbReference>
<dbReference type="InterPro" id="IPR023198">
    <property type="entry name" value="PGP-like_dom2"/>
</dbReference>
<dbReference type="InterPro" id="IPR006323">
    <property type="entry name" value="Phosphonoacetald_hydro"/>
</dbReference>
<dbReference type="NCBIfam" id="TIGR01509">
    <property type="entry name" value="HAD-SF-IA-v3"/>
    <property type="match status" value="1"/>
</dbReference>
<dbReference type="NCBIfam" id="TIGR01422">
    <property type="entry name" value="phosphonatase"/>
    <property type="match status" value="1"/>
</dbReference>
<dbReference type="PANTHER" id="PTHR43434">
    <property type="entry name" value="PHOSPHOGLYCOLATE PHOSPHATASE"/>
    <property type="match status" value="1"/>
</dbReference>
<dbReference type="PANTHER" id="PTHR43434:SF19">
    <property type="entry name" value="PHOSPHONOACETALDEHYDE HYDROLASE"/>
    <property type="match status" value="1"/>
</dbReference>
<dbReference type="Pfam" id="PF00702">
    <property type="entry name" value="Hydrolase"/>
    <property type="match status" value="1"/>
</dbReference>
<dbReference type="SFLD" id="SFLDG01135">
    <property type="entry name" value="C1.5.6:_HAD__Beta-PGM__Phospha"/>
    <property type="match status" value="1"/>
</dbReference>
<dbReference type="SFLD" id="SFLDG01129">
    <property type="entry name" value="C1.5:_HAD__Beta-PGM__Phosphata"/>
    <property type="match status" value="1"/>
</dbReference>
<dbReference type="SUPFAM" id="SSF56784">
    <property type="entry name" value="HAD-like"/>
    <property type="match status" value="1"/>
</dbReference>
<keyword id="KW-0378">Hydrolase</keyword>
<keyword id="KW-0460">Magnesium</keyword>
<keyword id="KW-0479">Metal-binding</keyword>
<keyword id="KW-1185">Reference proteome</keyword>
<keyword id="KW-0704">Schiff base</keyword>
<proteinExistence type="inferred from homology"/>
<accession>Q2SHM4</accession>